<gene>
    <name type="primary">Pygo1</name>
</gene>
<evidence type="ECO:0000250" key="1"/>
<evidence type="ECO:0000255" key="2"/>
<evidence type="ECO:0000255" key="3">
    <source>
        <dbReference type="PROSITE-ProRule" id="PRU00146"/>
    </source>
</evidence>
<evidence type="ECO:0000256" key="4">
    <source>
        <dbReference type="SAM" id="MobiDB-lite"/>
    </source>
</evidence>
<evidence type="ECO:0000305" key="5"/>
<evidence type="ECO:0007829" key="6">
    <source>
        <dbReference type="PDB" id="2YYR"/>
    </source>
</evidence>
<sequence>MSAEQDKEPIALKRVRGGDSGLDGLGGPNIQLGSPDKKKRKANTQGSSFPPLSEYAPPPNPNSDHLVAANPFDDSYNTISYKPLPSSNPYLGPGYPGFGGYSTFRMPPHVPPRMSSPYCGPYSLRNQPHPFPQNPLGMGFNRPHAFNFGPHDNSNFGNPPYNNVLTQDINMPGQHFRQGSAENFSQIPPQNVGQVSNPDLASNFAPGNNSNFTSPLETNHSFIPPPNAFGQAKAPLPKQDFTQGATKTPNQNSSTHPPHLNMEDPVNQSNVELKNVNRNNVVQENSRSGSAEATNNHANGTQNKPRQPRGAADLCTPDKSRKFSLLPSRHGHSSSDPVYPCGICTNEVNDDQDAILCEASCQKWFHRICTGMTETAYGLLTAEASAVWGCDTCMADKDVQLMRTREAFGPPAVGGDA</sequence>
<dbReference type="EMBL" id="AK011208">
    <property type="protein sequence ID" value="BAB27468.1"/>
    <property type="molecule type" value="mRNA"/>
</dbReference>
<dbReference type="CCDS" id="CCDS23332.1"/>
<dbReference type="RefSeq" id="NP_082392.1">
    <property type="nucleotide sequence ID" value="NM_028116.3"/>
</dbReference>
<dbReference type="PDB" id="2DX8">
    <property type="method" value="X-ray"/>
    <property type="resolution" value="2.70 A"/>
    <property type="chains" value="A/B=330-396"/>
</dbReference>
<dbReference type="PDB" id="2YYR">
    <property type="method" value="X-ray"/>
    <property type="resolution" value="2.50 A"/>
    <property type="chains" value="A/B=330-396"/>
</dbReference>
<dbReference type="PDBsum" id="2DX8"/>
<dbReference type="PDBsum" id="2YYR"/>
<dbReference type="SMR" id="Q9D0P5"/>
<dbReference type="BioGRID" id="215174">
    <property type="interactions" value="6"/>
</dbReference>
<dbReference type="FunCoup" id="Q9D0P5">
    <property type="interactions" value="702"/>
</dbReference>
<dbReference type="IntAct" id="Q9D0P5">
    <property type="interactions" value="9"/>
</dbReference>
<dbReference type="MINT" id="Q9D0P5"/>
<dbReference type="STRING" id="10090.ENSMUSP00000044368"/>
<dbReference type="iPTMnet" id="Q9D0P5"/>
<dbReference type="PhosphoSitePlus" id="Q9D0P5"/>
<dbReference type="PaxDb" id="10090-ENSMUSP00000044368"/>
<dbReference type="ProteomicsDB" id="301984"/>
<dbReference type="Antibodypedia" id="25101">
    <property type="antibodies" value="158 antibodies from 22 providers"/>
</dbReference>
<dbReference type="Ensembl" id="ENSMUST00000038489.6">
    <property type="protein sequence ID" value="ENSMUSP00000044368.6"/>
    <property type="gene ID" value="ENSMUSG00000034910.6"/>
</dbReference>
<dbReference type="GeneID" id="72135"/>
<dbReference type="KEGG" id="mmu:72135"/>
<dbReference type="UCSC" id="uc009qqi.1">
    <property type="organism name" value="mouse"/>
</dbReference>
<dbReference type="AGR" id="MGI:1919385"/>
<dbReference type="CTD" id="26108"/>
<dbReference type="MGI" id="MGI:1919385">
    <property type="gene designation" value="Pygo1"/>
</dbReference>
<dbReference type="VEuPathDB" id="HostDB:ENSMUSG00000034910"/>
<dbReference type="eggNOG" id="ENOG502QTIZ">
    <property type="taxonomic scope" value="Eukaryota"/>
</dbReference>
<dbReference type="GeneTree" id="ENSGT00530000063948"/>
<dbReference type="HOGENOM" id="CLU_686883_0_0_1"/>
<dbReference type="InParanoid" id="Q9D0P5"/>
<dbReference type="OMA" id="CTHEVND"/>
<dbReference type="OrthoDB" id="270215at2759"/>
<dbReference type="PhylomeDB" id="Q9D0P5"/>
<dbReference type="TreeFam" id="TF333020"/>
<dbReference type="Reactome" id="R-MMU-201722">
    <property type="pathway name" value="Formation of the beta-catenin:TCF transactivating complex"/>
</dbReference>
<dbReference type="BioGRID-ORCS" id="72135">
    <property type="hits" value="3 hits in 81 CRISPR screens"/>
</dbReference>
<dbReference type="EvolutionaryTrace" id="Q9D0P5"/>
<dbReference type="PRO" id="PR:Q9D0P5"/>
<dbReference type="Proteomes" id="UP000000589">
    <property type="component" value="Chromosome 9"/>
</dbReference>
<dbReference type="RNAct" id="Q9D0P5">
    <property type="molecule type" value="protein"/>
</dbReference>
<dbReference type="Bgee" id="ENSMUSG00000034910">
    <property type="expression patterns" value="Expressed in cortical plate and 116 other cell types or tissues"/>
</dbReference>
<dbReference type="ExpressionAtlas" id="Q9D0P5">
    <property type="expression patterns" value="baseline and differential"/>
</dbReference>
<dbReference type="GO" id="GO:0005634">
    <property type="term" value="C:nucleus"/>
    <property type="evidence" value="ECO:0000314"/>
    <property type="project" value="MGI"/>
</dbReference>
<dbReference type="GO" id="GO:0140002">
    <property type="term" value="F:histone H3K4me3 reader activity"/>
    <property type="evidence" value="ECO:0007669"/>
    <property type="project" value="Ensembl"/>
</dbReference>
<dbReference type="GO" id="GO:0008270">
    <property type="term" value="F:zinc ion binding"/>
    <property type="evidence" value="ECO:0007669"/>
    <property type="project" value="UniProtKB-KW"/>
</dbReference>
<dbReference type="GO" id="GO:0060070">
    <property type="term" value="P:canonical Wnt signaling pathway"/>
    <property type="evidence" value="ECO:0000316"/>
    <property type="project" value="MGI"/>
</dbReference>
<dbReference type="GO" id="GO:0002244">
    <property type="term" value="P:hematopoietic progenitor cell differentiation"/>
    <property type="evidence" value="ECO:0000315"/>
    <property type="project" value="MGI"/>
</dbReference>
<dbReference type="GO" id="GO:0001822">
    <property type="term" value="P:kidney development"/>
    <property type="evidence" value="ECO:0000316"/>
    <property type="project" value="MGI"/>
</dbReference>
<dbReference type="GO" id="GO:0045944">
    <property type="term" value="P:positive regulation of transcription by RNA polymerase II"/>
    <property type="evidence" value="ECO:0000316"/>
    <property type="project" value="MGI"/>
</dbReference>
<dbReference type="GO" id="GO:0034504">
    <property type="term" value="P:protein localization to nucleus"/>
    <property type="evidence" value="ECO:0000314"/>
    <property type="project" value="MGI"/>
</dbReference>
<dbReference type="GO" id="GO:0007286">
    <property type="term" value="P:spermatid development"/>
    <property type="evidence" value="ECO:0000316"/>
    <property type="project" value="MGI"/>
</dbReference>
<dbReference type="GO" id="GO:0007289">
    <property type="term" value="P:spermatid nucleus differentiation"/>
    <property type="evidence" value="ECO:0000316"/>
    <property type="project" value="MGI"/>
</dbReference>
<dbReference type="CDD" id="cd15635">
    <property type="entry name" value="PHD_PYGO1"/>
    <property type="match status" value="1"/>
</dbReference>
<dbReference type="FunFam" id="3.30.40.10:FF:000107">
    <property type="entry name" value="pygopus homolog 1"/>
    <property type="match status" value="1"/>
</dbReference>
<dbReference type="Gene3D" id="3.30.40.10">
    <property type="entry name" value="Zinc/RING finger domain, C3HC4 (zinc finger)"/>
    <property type="match status" value="1"/>
</dbReference>
<dbReference type="InterPro" id="IPR052475">
    <property type="entry name" value="Wnt_Signal_Transd_Protein"/>
</dbReference>
<dbReference type="InterPro" id="IPR019786">
    <property type="entry name" value="Zinc_finger_PHD-type_CS"/>
</dbReference>
<dbReference type="InterPro" id="IPR011011">
    <property type="entry name" value="Znf_FYVE_PHD"/>
</dbReference>
<dbReference type="InterPro" id="IPR001965">
    <property type="entry name" value="Znf_PHD"/>
</dbReference>
<dbReference type="InterPro" id="IPR019787">
    <property type="entry name" value="Znf_PHD-finger"/>
</dbReference>
<dbReference type="InterPro" id="IPR013083">
    <property type="entry name" value="Znf_RING/FYVE/PHD"/>
</dbReference>
<dbReference type="PANTHER" id="PTHR23194">
    <property type="entry name" value="PYGOPUS"/>
    <property type="match status" value="1"/>
</dbReference>
<dbReference type="PANTHER" id="PTHR23194:SF3">
    <property type="entry name" value="PYGOPUS HOMOLOG 1"/>
    <property type="match status" value="1"/>
</dbReference>
<dbReference type="Pfam" id="PF00628">
    <property type="entry name" value="PHD"/>
    <property type="match status" value="1"/>
</dbReference>
<dbReference type="SMART" id="SM00249">
    <property type="entry name" value="PHD"/>
    <property type="match status" value="1"/>
</dbReference>
<dbReference type="SUPFAM" id="SSF57903">
    <property type="entry name" value="FYVE/PHD zinc finger"/>
    <property type="match status" value="1"/>
</dbReference>
<dbReference type="PROSITE" id="PS01359">
    <property type="entry name" value="ZF_PHD_1"/>
    <property type="match status" value="1"/>
</dbReference>
<dbReference type="PROSITE" id="PS50016">
    <property type="entry name" value="ZF_PHD_2"/>
    <property type="match status" value="1"/>
</dbReference>
<feature type="chain" id="PRO_0000097122" description="Pygopus homolog 1">
    <location>
        <begin position="1"/>
        <end position="417"/>
    </location>
</feature>
<feature type="zinc finger region" description="PHD-type" evidence="3">
    <location>
        <begin position="338"/>
        <end position="396"/>
    </location>
</feature>
<feature type="region of interest" description="Disordered" evidence="4">
    <location>
        <begin position="1"/>
        <end position="71"/>
    </location>
</feature>
<feature type="region of interest" description="Disordered" evidence="4">
    <location>
        <begin position="175"/>
        <end position="265"/>
    </location>
</feature>
<feature type="region of interest" description="Disordered" evidence="4">
    <location>
        <begin position="284"/>
        <end position="318"/>
    </location>
</feature>
<feature type="region of interest" description="Interaction with H3K4me2" evidence="1">
    <location>
        <begin position="339"/>
        <end position="386"/>
    </location>
</feature>
<feature type="region of interest" description="Interaction with BCL9" evidence="1">
    <location>
        <begin position="371"/>
        <end position="389"/>
    </location>
</feature>
<feature type="short sequence motif" description="Nuclear localization signal" evidence="2">
    <location>
        <begin position="35"/>
        <end position="41"/>
    </location>
</feature>
<feature type="compositionally biased region" description="Basic and acidic residues" evidence="4">
    <location>
        <begin position="1"/>
        <end position="11"/>
    </location>
</feature>
<feature type="compositionally biased region" description="Gly residues" evidence="4">
    <location>
        <begin position="18"/>
        <end position="27"/>
    </location>
</feature>
<feature type="compositionally biased region" description="Polar residues" evidence="4">
    <location>
        <begin position="180"/>
        <end position="221"/>
    </location>
</feature>
<feature type="compositionally biased region" description="Polar residues" evidence="4">
    <location>
        <begin position="240"/>
        <end position="256"/>
    </location>
</feature>
<feature type="compositionally biased region" description="Polar residues" evidence="4">
    <location>
        <begin position="284"/>
        <end position="305"/>
    </location>
</feature>
<feature type="turn" evidence="6">
    <location>
        <begin position="342"/>
        <end position="344"/>
    </location>
</feature>
<feature type="strand" evidence="6">
    <location>
        <begin position="354"/>
        <end position="356"/>
    </location>
</feature>
<feature type="turn" evidence="6">
    <location>
        <begin position="358"/>
        <end position="361"/>
    </location>
</feature>
<feature type="strand" evidence="6">
    <location>
        <begin position="364"/>
        <end position="366"/>
    </location>
</feature>
<feature type="helix" evidence="6">
    <location>
        <begin position="367"/>
        <end position="370"/>
    </location>
</feature>
<feature type="helix" evidence="6">
    <location>
        <begin position="374"/>
        <end position="382"/>
    </location>
</feature>
<feature type="strand" evidence="6">
    <location>
        <begin position="386"/>
        <end position="388"/>
    </location>
</feature>
<feature type="helix" evidence="6">
    <location>
        <begin position="391"/>
        <end position="394"/>
    </location>
</feature>
<reference key="1">
    <citation type="journal article" date="2005" name="Science">
        <title>The transcriptional landscape of the mammalian genome.</title>
        <authorList>
            <person name="Carninci P."/>
            <person name="Kasukawa T."/>
            <person name="Katayama S."/>
            <person name="Gough J."/>
            <person name="Frith M.C."/>
            <person name="Maeda N."/>
            <person name="Oyama R."/>
            <person name="Ravasi T."/>
            <person name="Lenhard B."/>
            <person name="Wells C."/>
            <person name="Kodzius R."/>
            <person name="Shimokawa K."/>
            <person name="Bajic V.B."/>
            <person name="Brenner S.E."/>
            <person name="Batalov S."/>
            <person name="Forrest A.R."/>
            <person name="Zavolan M."/>
            <person name="Davis M.J."/>
            <person name="Wilming L.G."/>
            <person name="Aidinis V."/>
            <person name="Allen J.E."/>
            <person name="Ambesi-Impiombato A."/>
            <person name="Apweiler R."/>
            <person name="Aturaliya R.N."/>
            <person name="Bailey T.L."/>
            <person name="Bansal M."/>
            <person name="Baxter L."/>
            <person name="Beisel K.W."/>
            <person name="Bersano T."/>
            <person name="Bono H."/>
            <person name="Chalk A.M."/>
            <person name="Chiu K.P."/>
            <person name="Choudhary V."/>
            <person name="Christoffels A."/>
            <person name="Clutterbuck D.R."/>
            <person name="Crowe M.L."/>
            <person name="Dalla E."/>
            <person name="Dalrymple B.P."/>
            <person name="de Bono B."/>
            <person name="Della Gatta G."/>
            <person name="di Bernardo D."/>
            <person name="Down T."/>
            <person name="Engstrom P."/>
            <person name="Fagiolini M."/>
            <person name="Faulkner G."/>
            <person name="Fletcher C.F."/>
            <person name="Fukushima T."/>
            <person name="Furuno M."/>
            <person name="Futaki S."/>
            <person name="Gariboldi M."/>
            <person name="Georgii-Hemming P."/>
            <person name="Gingeras T.R."/>
            <person name="Gojobori T."/>
            <person name="Green R.E."/>
            <person name="Gustincich S."/>
            <person name="Harbers M."/>
            <person name="Hayashi Y."/>
            <person name="Hensch T.K."/>
            <person name="Hirokawa N."/>
            <person name="Hill D."/>
            <person name="Huminiecki L."/>
            <person name="Iacono M."/>
            <person name="Ikeo K."/>
            <person name="Iwama A."/>
            <person name="Ishikawa T."/>
            <person name="Jakt M."/>
            <person name="Kanapin A."/>
            <person name="Katoh M."/>
            <person name="Kawasawa Y."/>
            <person name="Kelso J."/>
            <person name="Kitamura H."/>
            <person name="Kitano H."/>
            <person name="Kollias G."/>
            <person name="Krishnan S.P."/>
            <person name="Kruger A."/>
            <person name="Kummerfeld S.K."/>
            <person name="Kurochkin I.V."/>
            <person name="Lareau L.F."/>
            <person name="Lazarevic D."/>
            <person name="Lipovich L."/>
            <person name="Liu J."/>
            <person name="Liuni S."/>
            <person name="McWilliam S."/>
            <person name="Madan Babu M."/>
            <person name="Madera M."/>
            <person name="Marchionni L."/>
            <person name="Matsuda H."/>
            <person name="Matsuzawa S."/>
            <person name="Miki H."/>
            <person name="Mignone F."/>
            <person name="Miyake S."/>
            <person name="Morris K."/>
            <person name="Mottagui-Tabar S."/>
            <person name="Mulder N."/>
            <person name="Nakano N."/>
            <person name="Nakauchi H."/>
            <person name="Ng P."/>
            <person name="Nilsson R."/>
            <person name="Nishiguchi S."/>
            <person name="Nishikawa S."/>
            <person name="Nori F."/>
            <person name="Ohara O."/>
            <person name="Okazaki Y."/>
            <person name="Orlando V."/>
            <person name="Pang K.C."/>
            <person name="Pavan W.J."/>
            <person name="Pavesi G."/>
            <person name="Pesole G."/>
            <person name="Petrovsky N."/>
            <person name="Piazza S."/>
            <person name="Reed J."/>
            <person name="Reid J.F."/>
            <person name="Ring B.Z."/>
            <person name="Ringwald M."/>
            <person name="Rost B."/>
            <person name="Ruan Y."/>
            <person name="Salzberg S.L."/>
            <person name="Sandelin A."/>
            <person name="Schneider C."/>
            <person name="Schoenbach C."/>
            <person name="Sekiguchi K."/>
            <person name="Semple C.A."/>
            <person name="Seno S."/>
            <person name="Sessa L."/>
            <person name="Sheng Y."/>
            <person name="Shibata Y."/>
            <person name="Shimada H."/>
            <person name="Shimada K."/>
            <person name="Silva D."/>
            <person name="Sinclair B."/>
            <person name="Sperling S."/>
            <person name="Stupka E."/>
            <person name="Sugiura K."/>
            <person name="Sultana R."/>
            <person name="Takenaka Y."/>
            <person name="Taki K."/>
            <person name="Tammoja K."/>
            <person name="Tan S.L."/>
            <person name="Tang S."/>
            <person name="Taylor M.S."/>
            <person name="Tegner J."/>
            <person name="Teichmann S.A."/>
            <person name="Ueda H.R."/>
            <person name="van Nimwegen E."/>
            <person name="Verardo R."/>
            <person name="Wei C.L."/>
            <person name="Yagi K."/>
            <person name="Yamanishi H."/>
            <person name="Zabarovsky E."/>
            <person name="Zhu S."/>
            <person name="Zimmer A."/>
            <person name="Hide W."/>
            <person name="Bult C."/>
            <person name="Grimmond S.M."/>
            <person name="Teasdale R.D."/>
            <person name="Liu E.T."/>
            <person name="Brusic V."/>
            <person name="Quackenbush J."/>
            <person name="Wahlestedt C."/>
            <person name="Mattick J.S."/>
            <person name="Hume D.A."/>
            <person name="Kai C."/>
            <person name="Sasaki D."/>
            <person name="Tomaru Y."/>
            <person name="Fukuda S."/>
            <person name="Kanamori-Katayama M."/>
            <person name="Suzuki M."/>
            <person name="Aoki J."/>
            <person name="Arakawa T."/>
            <person name="Iida J."/>
            <person name="Imamura K."/>
            <person name="Itoh M."/>
            <person name="Kato T."/>
            <person name="Kawaji H."/>
            <person name="Kawagashira N."/>
            <person name="Kawashima T."/>
            <person name="Kojima M."/>
            <person name="Kondo S."/>
            <person name="Konno H."/>
            <person name="Nakano K."/>
            <person name="Ninomiya N."/>
            <person name="Nishio T."/>
            <person name="Okada M."/>
            <person name="Plessy C."/>
            <person name="Shibata K."/>
            <person name="Shiraki T."/>
            <person name="Suzuki S."/>
            <person name="Tagami M."/>
            <person name="Waki K."/>
            <person name="Watahiki A."/>
            <person name="Okamura-Oho Y."/>
            <person name="Suzuki H."/>
            <person name="Kawai J."/>
            <person name="Hayashizaki Y."/>
        </authorList>
    </citation>
    <scope>NUCLEOTIDE SEQUENCE [LARGE SCALE MRNA]</scope>
    <source>
        <strain>C57BL/6J</strain>
        <tissue>Embryo</tissue>
    </source>
</reference>
<proteinExistence type="evidence at protein level"/>
<organism>
    <name type="scientific">Mus musculus</name>
    <name type="common">Mouse</name>
    <dbReference type="NCBI Taxonomy" id="10090"/>
    <lineage>
        <taxon>Eukaryota</taxon>
        <taxon>Metazoa</taxon>
        <taxon>Chordata</taxon>
        <taxon>Craniata</taxon>
        <taxon>Vertebrata</taxon>
        <taxon>Euteleostomi</taxon>
        <taxon>Mammalia</taxon>
        <taxon>Eutheria</taxon>
        <taxon>Euarchontoglires</taxon>
        <taxon>Glires</taxon>
        <taxon>Rodentia</taxon>
        <taxon>Myomorpha</taxon>
        <taxon>Muroidea</taxon>
        <taxon>Muridae</taxon>
        <taxon>Murinae</taxon>
        <taxon>Mus</taxon>
        <taxon>Mus</taxon>
    </lineage>
</organism>
<comment type="function">
    <text evidence="1">Involved in signal transduction through the Wnt pathway.</text>
</comment>
<comment type="subunit">
    <text evidence="1">Interacts with BCL9 via The PHD-type zinc finger motiv, and thereby becomes part of the nuclear beta-catenin/TCF complex. Found in a complex with BCL9L, CDC73, CTNNB1 and PYGO1. Interacts with histone H3 mono-, di- or tri-methylated at 'Lys4' (H3K4me1, H3K4me2, H3K4me3); the interaction is enhanced by the interaction with BCL9 (By similarity).</text>
</comment>
<comment type="interaction">
    <interactant intactId="EBI-8607760">
        <id>Q9D0P5</id>
    </interactant>
    <interactant intactId="EBI-141287">
        <id>Q9W0N9</id>
        <label>ebd1</label>
    </interactant>
    <organismsDiffer>true</organismsDiffer>
    <experiments>3</experiments>
</comment>
<comment type="subcellular location">
    <subcellularLocation>
        <location evidence="5">Nucleus</location>
    </subcellularLocation>
</comment>
<accession>Q9D0P5</accession>
<name>PYGO1_MOUSE</name>
<keyword id="KW-0002">3D-structure</keyword>
<keyword id="KW-0479">Metal-binding</keyword>
<keyword id="KW-0539">Nucleus</keyword>
<keyword id="KW-1185">Reference proteome</keyword>
<keyword id="KW-0879">Wnt signaling pathway</keyword>
<keyword id="KW-0862">Zinc</keyword>
<keyword id="KW-0863">Zinc-finger</keyword>
<protein>
    <recommendedName>
        <fullName>Pygopus homolog 1</fullName>
    </recommendedName>
</protein>